<proteinExistence type="inferred from homology"/>
<organism>
    <name type="scientific">Klebsiella pneumoniae</name>
    <dbReference type="NCBI Taxonomy" id="573"/>
    <lineage>
        <taxon>Bacteria</taxon>
        <taxon>Pseudomonadati</taxon>
        <taxon>Pseudomonadota</taxon>
        <taxon>Gammaproteobacteria</taxon>
        <taxon>Enterobacterales</taxon>
        <taxon>Enterobacteriaceae</taxon>
        <taxon>Klebsiella/Raoultella group</taxon>
        <taxon>Klebsiella</taxon>
        <taxon>Klebsiella pneumoniae complex</taxon>
    </lineage>
</organism>
<evidence type="ECO:0000255" key="1">
    <source>
        <dbReference type="HAMAP-Rule" id="MF_01687"/>
    </source>
</evidence>
<feature type="chain" id="PRO_0000057662" description="Beta-galactosidase">
    <location>
        <begin position="1"/>
        <end position="1034"/>
    </location>
</feature>
<feature type="active site" description="Proton donor" evidence="1">
    <location>
        <position position="468"/>
    </location>
</feature>
<feature type="active site" description="Nucleophile" evidence="1">
    <location>
        <position position="544"/>
    </location>
</feature>
<feature type="binding site" evidence="1">
    <location>
        <position position="108"/>
    </location>
    <ligand>
        <name>substrate</name>
    </ligand>
</feature>
<feature type="binding site" evidence="1">
    <location>
        <position position="207"/>
    </location>
    <ligand>
        <name>Na(+)</name>
        <dbReference type="ChEBI" id="CHEBI:29101"/>
    </ligand>
</feature>
<feature type="binding site" evidence="1">
    <location>
        <position position="207"/>
    </location>
    <ligand>
        <name>substrate</name>
    </ligand>
</feature>
<feature type="binding site" evidence="1">
    <location>
        <position position="423"/>
    </location>
    <ligand>
        <name>Mg(2+)</name>
        <dbReference type="ChEBI" id="CHEBI:18420"/>
        <label>1</label>
    </ligand>
</feature>
<feature type="binding site" evidence="1">
    <location>
        <position position="425"/>
    </location>
    <ligand>
        <name>Mg(2+)</name>
        <dbReference type="ChEBI" id="CHEBI:18420"/>
        <label>1</label>
    </ligand>
</feature>
<feature type="binding site" evidence="1">
    <location>
        <position position="468"/>
    </location>
    <ligand>
        <name>Mg(2+)</name>
        <dbReference type="ChEBI" id="CHEBI:18420"/>
        <label>1</label>
    </ligand>
</feature>
<feature type="binding site" evidence="1">
    <location>
        <position position="468"/>
    </location>
    <ligand>
        <name>substrate</name>
    </ligand>
</feature>
<feature type="binding site" evidence="1">
    <location>
        <begin position="544"/>
        <end position="547"/>
    </location>
    <ligand>
        <name>substrate</name>
    </ligand>
</feature>
<feature type="binding site" evidence="1">
    <location>
        <position position="604"/>
    </location>
    <ligand>
        <name>Mg(2+)</name>
        <dbReference type="ChEBI" id="CHEBI:18420"/>
        <label>2</label>
    </ligand>
</feature>
<feature type="binding site" evidence="1">
    <location>
        <position position="608"/>
    </location>
    <ligand>
        <name>Na(+)</name>
        <dbReference type="ChEBI" id="CHEBI:29101"/>
    </ligand>
</feature>
<feature type="binding site" evidence="1">
    <location>
        <position position="611"/>
    </location>
    <ligand>
        <name>Na(+)</name>
        <dbReference type="ChEBI" id="CHEBI:29101"/>
    </ligand>
</feature>
<feature type="binding site" evidence="1">
    <location>
        <position position="611"/>
    </location>
    <ligand>
        <name>substrate</name>
    </ligand>
</feature>
<feature type="binding site" evidence="1">
    <location>
        <position position="1010"/>
    </location>
    <ligand>
        <name>substrate</name>
    </ligand>
</feature>
<feature type="site" description="Transition state stabilizer" evidence="1">
    <location>
        <position position="364"/>
    </location>
</feature>
<feature type="site" description="Transition state stabilizer" evidence="1">
    <location>
        <position position="398"/>
    </location>
</feature>
<gene>
    <name evidence="1" type="primary">lacZ</name>
</gene>
<name>BGAL1_KLEPN</name>
<protein>
    <recommendedName>
        <fullName evidence="1">Beta-galactosidase</fullName>
        <shortName evidence="1">Beta-gal</shortName>
        <ecNumber evidence="1">3.2.1.23</ecNumber>
    </recommendedName>
    <alternativeName>
        <fullName evidence="1">Lactase</fullName>
    </alternativeName>
</protein>
<reference key="1">
    <citation type="journal article" date="1985" name="J. Bacteriol.">
        <title>Nucleotide sequence of Klebsiella pneumoniae lac genes.</title>
        <authorList>
            <person name="Buvinger W.E."/>
            <person name="Riley M."/>
        </authorList>
    </citation>
    <scope>NUCLEOTIDE SEQUENCE [GENOMIC DNA]</scope>
</reference>
<dbReference type="EC" id="3.2.1.23" evidence="1"/>
<dbReference type="EMBL" id="M11441">
    <property type="protein sequence ID" value="AAA25082.1"/>
    <property type="molecule type" value="Genomic_DNA"/>
</dbReference>
<dbReference type="PIR" id="A24925">
    <property type="entry name" value="A24925"/>
</dbReference>
<dbReference type="SMR" id="P06219"/>
<dbReference type="CAZy" id="GH2">
    <property type="family name" value="Glycoside Hydrolase Family 2"/>
</dbReference>
<dbReference type="GO" id="GO:0009341">
    <property type="term" value="C:beta-galactosidase complex"/>
    <property type="evidence" value="ECO:0007669"/>
    <property type="project" value="InterPro"/>
</dbReference>
<dbReference type="GO" id="GO:0004565">
    <property type="term" value="F:beta-galactosidase activity"/>
    <property type="evidence" value="ECO:0007669"/>
    <property type="project" value="UniProtKB-EC"/>
</dbReference>
<dbReference type="GO" id="GO:0030246">
    <property type="term" value="F:carbohydrate binding"/>
    <property type="evidence" value="ECO:0007669"/>
    <property type="project" value="InterPro"/>
</dbReference>
<dbReference type="GO" id="GO:0000287">
    <property type="term" value="F:magnesium ion binding"/>
    <property type="evidence" value="ECO:0007669"/>
    <property type="project" value="UniProtKB-UniRule"/>
</dbReference>
<dbReference type="GO" id="GO:0005990">
    <property type="term" value="P:lactose catabolic process"/>
    <property type="evidence" value="ECO:0007669"/>
    <property type="project" value="TreeGrafter"/>
</dbReference>
<dbReference type="FunFam" id="3.20.20.80:FF:000018">
    <property type="entry name" value="Beta-galactosidase"/>
    <property type="match status" value="1"/>
</dbReference>
<dbReference type="Gene3D" id="2.70.98.10">
    <property type="match status" value="1"/>
</dbReference>
<dbReference type="Gene3D" id="2.60.120.260">
    <property type="entry name" value="Galactose-binding domain-like"/>
    <property type="match status" value="1"/>
</dbReference>
<dbReference type="Gene3D" id="3.20.20.80">
    <property type="entry name" value="Glycosidases"/>
    <property type="match status" value="1"/>
</dbReference>
<dbReference type="Gene3D" id="2.60.40.10">
    <property type="entry name" value="Immunoglobulins"/>
    <property type="match status" value="2"/>
</dbReference>
<dbReference type="HAMAP" id="MF_01687">
    <property type="entry name" value="Beta_gal"/>
    <property type="match status" value="1"/>
</dbReference>
<dbReference type="InterPro" id="IPR004199">
    <property type="entry name" value="B-gal_small/dom_5"/>
</dbReference>
<dbReference type="InterPro" id="IPR050347">
    <property type="entry name" value="Bact_Beta-galactosidase"/>
</dbReference>
<dbReference type="InterPro" id="IPR036156">
    <property type="entry name" value="Beta-gal/glucu_dom_sf"/>
</dbReference>
<dbReference type="InterPro" id="IPR011013">
    <property type="entry name" value="Gal_mutarotase_sf_dom"/>
</dbReference>
<dbReference type="InterPro" id="IPR008979">
    <property type="entry name" value="Galactose-bd-like_sf"/>
</dbReference>
<dbReference type="InterPro" id="IPR014718">
    <property type="entry name" value="GH-type_carb-bd"/>
</dbReference>
<dbReference type="InterPro" id="IPR006101">
    <property type="entry name" value="Glyco_hydro_2"/>
</dbReference>
<dbReference type="InterPro" id="IPR023232">
    <property type="entry name" value="Glyco_hydro_2_AS"/>
</dbReference>
<dbReference type="InterPro" id="IPR023933">
    <property type="entry name" value="Glyco_hydro_2_beta_Galsidase"/>
</dbReference>
<dbReference type="InterPro" id="IPR006103">
    <property type="entry name" value="Glyco_hydro_2_cat"/>
</dbReference>
<dbReference type="InterPro" id="IPR023230">
    <property type="entry name" value="Glyco_hydro_2_CS"/>
</dbReference>
<dbReference type="InterPro" id="IPR006102">
    <property type="entry name" value="Glyco_hydro_2_Ig-like"/>
</dbReference>
<dbReference type="InterPro" id="IPR006104">
    <property type="entry name" value="Glyco_hydro_2_N"/>
</dbReference>
<dbReference type="InterPro" id="IPR017853">
    <property type="entry name" value="Glycoside_hydrolase_SF"/>
</dbReference>
<dbReference type="InterPro" id="IPR013783">
    <property type="entry name" value="Ig-like_fold"/>
</dbReference>
<dbReference type="InterPro" id="IPR032312">
    <property type="entry name" value="LacZ_4"/>
</dbReference>
<dbReference type="NCBIfam" id="NF007074">
    <property type="entry name" value="PRK09525.1"/>
    <property type="match status" value="1"/>
</dbReference>
<dbReference type="PANTHER" id="PTHR46323">
    <property type="entry name" value="BETA-GALACTOSIDASE"/>
    <property type="match status" value="1"/>
</dbReference>
<dbReference type="PANTHER" id="PTHR46323:SF2">
    <property type="entry name" value="BETA-GALACTOSIDASE"/>
    <property type="match status" value="1"/>
</dbReference>
<dbReference type="Pfam" id="PF02929">
    <property type="entry name" value="Bgal_small_N"/>
    <property type="match status" value="1"/>
</dbReference>
<dbReference type="Pfam" id="PF00703">
    <property type="entry name" value="Glyco_hydro_2"/>
    <property type="match status" value="1"/>
</dbReference>
<dbReference type="Pfam" id="PF02836">
    <property type="entry name" value="Glyco_hydro_2_C"/>
    <property type="match status" value="1"/>
</dbReference>
<dbReference type="Pfam" id="PF02837">
    <property type="entry name" value="Glyco_hydro_2_N"/>
    <property type="match status" value="1"/>
</dbReference>
<dbReference type="Pfam" id="PF16353">
    <property type="entry name" value="LacZ_4"/>
    <property type="match status" value="1"/>
</dbReference>
<dbReference type="PRINTS" id="PR00132">
    <property type="entry name" value="GLHYDRLASE2"/>
</dbReference>
<dbReference type="SMART" id="SM01038">
    <property type="entry name" value="Bgal_small_N"/>
    <property type="match status" value="1"/>
</dbReference>
<dbReference type="SUPFAM" id="SSF51445">
    <property type="entry name" value="(Trans)glycosidases"/>
    <property type="match status" value="1"/>
</dbReference>
<dbReference type="SUPFAM" id="SSF49303">
    <property type="entry name" value="beta-Galactosidase/glucuronidase domain"/>
    <property type="match status" value="2"/>
</dbReference>
<dbReference type="SUPFAM" id="SSF74650">
    <property type="entry name" value="Galactose mutarotase-like"/>
    <property type="match status" value="1"/>
</dbReference>
<dbReference type="SUPFAM" id="SSF49785">
    <property type="entry name" value="Galactose-binding domain-like"/>
    <property type="match status" value="1"/>
</dbReference>
<dbReference type="PROSITE" id="PS00719">
    <property type="entry name" value="GLYCOSYL_HYDROL_F2_1"/>
    <property type="match status" value="1"/>
</dbReference>
<dbReference type="PROSITE" id="PS00608">
    <property type="entry name" value="GLYCOSYL_HYDROL_F2_2"/>
    <property type="match status" value="1"/>
</dbReference>
<sequence length="1034" mass="117517">MQISDTGRSHTPDFHAVLAREDWHNQTITHLNRLPAHPVFASWRDELAARDNLPSSRRRQLDGSGSSLTPAARLPSMRVVTQDLPDCRGTPVPSNWQMEGYDAPIYTNVRYPIDTTPPRVPEDNPTGCYSLHFTVEDTWRENGQTQIIFDGVNSAFHLWCNGVWVGYSQDSRLPAAFDLSPFLRPGDNRLCVMVMRWSAGSWLEDQDMWRMSGIFRSVWLLNKPQQRLCDVQLTPALDALYRDGTLQVQATIEATEAALAGLSVGVSLWRGEEQFAAGRQPLGTPTVDERGHYAERVDFSLAVATPAHWSAETPNCYRAVVTLWRGDELLEAEAWDIGFRRIEIADGLLRLNGKPLLIRGVNRHEHHHLRGQVVTEADMVQDILLMKQNNFNAVRCSHYPNAPRWYELCNRYGLYVVDEANIETHGMVPMNRLSDDPAWLPAFSARVTRMVQSNRNHPCIIIWSLGNESGGGGNHEALYHWLKRNDPSRPVQYEGGGADTTATDIICPMYARVERDQPIPAVPKWGIKKWISLPGEQRPLILCEYAHAMGNSLGNFADYWQAFREYPRLQGGFIWDWADQAIRKTFADGSVGWAYGGDFGDKPNDRQFCMNGLVFPDRTPHPSLVEAKHAQQYFQFTLLSTSPLRVRIISEYLFRPTDNEVVRWQVQAAGEPLYHGDLTLALPPEGSDEITLLDSLILPEGARAVWLTLEVTQPQATAWSEAEHRVAWQQFPLPAPLGCRRPPCLPALPDLIVSDEVWQIRAGSQCWTIDRRTGLLSRWSVGGQEQLLTPLRDQFIRAPLDNDIGVSEVERIDPNAWVERWRSAGLYDLEAHCVQCDAQRLANETLVDCRWHYLRGEEVVIVSHWRMHFTADGTLRLAVDGERAETLPPLPRVGLHFQVADQQAPVSWLGLGPHENYPDRRSSACFARWEQPLAAMTTPYIFPTENGLRCDTQALDWGRWHISGHFHFSVQPWSTRQLMETDHWHKMQAEDGVWITLDGLHMGVGGDDSWTPSVLPQWLLSQTRWQYEVSLRSL</sequence>
<keyword id="KW-0326">Glycosidase</keyword>
<keyword id="KW-0378">Hydrolase</keyword>
<keyword id="KW-0460">Magnesium</keyword>
<keyword id="KW-0479">Metal-binding</keyword>
<keyword id="KW-0915">Sodium</keyword>
<comment type="catalytic activity">
    <reaction evidence="1">
        <text>Hydrolysis of terminal non-reducing beta-D-galactose residues in beta-D-galactosides.</text>
        <dbReference type="EC" id="3.2.1.23"/>
    </reaction>
</comment>
<comment type="cofactor">
    <cofactor evidence="1">
        <name>Mg(2+)</name>
        <dbReference type="ChEBI" id="CHEBI:18420"/>
    </cofactor>
    <text evidence="1">Binds 2 magnesium ions per monomer.</text>
</comment>
<comment type="cofactor">
    <cofactor evidence="1">
        <name>Na(+)</name>
        <dbReference type="ChEBI" id="CHEBI:29101"/>
    </cofactor>
    <text evidence="1">Binds 1 sodium ion per monomer.</text>
</comment>
<comment type="subunit">
    <text>Homotetramer.</text>
</comment>
<comment type="similarity">
    <text evidence="1">Belongs to the glycosyl hydrolase 2 family.</text>
</comment>
<accession>P06219</accession>